<organism>
    <name type="scientific">Synechocystis sp. (strain ATCC 27184 / PCC 6803 / Kazusa)</name>
    <dbReference type="NCBI Taxonomy" id="1111708"/>
    <lineage>
        <taxon>Bacteria</taxon>
        <taxon>Bacillati</taxon>
        <taxon>Cyanobacteriota</taxon>
        <taxon>Cyanophyceae</taxon>
        <taxon>Synechococcales</taxon>
        <taxon>Merismopediaceae</taxon>
        <taxon>Synechocystis</taxon>
    </lineage>
</organism>
<feature type="chain" id="PRO_0000157892" description="Uncharacterized protein sll1613">
    <location>
        <begin position="1"/>
        <end position="145"/>
    </location>
</feature>
<accession>P73841</accession>
<protein>
    <recommendedName>
        <fullName>Uncharacterized protein sll1613</fullName>
    </recommendedName>
</protein>
<proteinExistence type="predicted"/>
<reference key="1">
    <citation type="journal article" date="1996" name="DNA Res.">
        <title>Sequence analysis of the genome of the unicellular cyanobacterium Synechocystis sp. strain PCC6803. II. Sequence determination of the entire genome and assignment of potential protein-coding regions.</title>
        <authorList>
            <person name="Kaneko T."/>
            <person name="Sato S."/>
            <person name="Kotani H."/>
            <person name="Tanaka A."/>
            <person name="Asamizu E."/>
            <person name="Nakamura Y."/>
            <person name="Miyajima N."/>
            <person name="Hirosawa M."/>
            <person name="Sugiura M."/>
            <person name="Sasamoto S."/>
            <person name="Kimura T."/>
            <person name="Hosouchi T."/>
            <person name="Matsuno A."/>
            <person name="Muraki A."/>
            <person name="Nakazaki N."/>
            <person name="Naruo K."/>
            <person name="Okumura S."/>
            <person name="Shimpo S."/>
            <person name="Takeuchi C."/>
            <person name="Wada T."/>
            <person name="Watanabe A."/>
            <person name="Yamada M."/>
            <person name="Yasuda M."/>
            <person name="Tabata S."/>
        </authorList>
    </citation>
    <scope>NUCLEOTIDE SEQUENCE [LARGE SCALE GENOMIC DNA]</scope>
    <source>
        <strain>ATCC 27184 / PCC 6803 / Kazusa</strain>
    </source>
</reference>
<keyword id="KW-1185">Reference proteome</keyword>
<name>Y1613_SYNY3</name>
<sequence>MAVANTNSPDQTLPVLVCFSGGEEIFRKNVVEGPFADEYKFAHEIKVSDSEGQHWVNFSGGMCVIDQGEVFNKKQPKLTDNLSCYSGAKKVVTFDVYGEETTIDEYVEGRTFLAKASGSVIASNSIHQYLLFGSGTCIGEEIGED</sequence>
<gene>
    <name type="ordered locus">sll1613</name>
</gene>
<dbReference type="EMBL" id="BA000022">
    <property type="protein sequence ID" value="BAA17898.1"/>
    <property type="molecule type" value="Genomic_DNA"/>
</dbReference>
<dbReference type="PIR" id="S75036">
    <property type="entry name" value="S75036"/>
</dbReference>
<dbReference type="IntAct" id="P73841">
    <property type="interactions" value="3"/>
</dbReference>
<dbReference type="STRING" id="1148.gene:10498767"/>
<dbReference type="PaxDb" id="1148-1652981"/>
<dbReference type="EnsemblBacteria" id="BAA17898">
    <property type="protein sequence ID" value="BAA17898"/>
    <property type="gene ID" value="BAA17898"/>
</dbReference>
<dbReference type="KEGG" id="syn:sll1613"/>
<dbReference type="eggNOG" id="ENOG5033KWH">
    <property type="taxonomic scope" value="Bacteria"/>
</dbReference>
<dbReference type="InParanoid" id="P73841"/>
<dbReference type="Proteomes" id="UP000001425">
    <property type="component" value="Chromosome"/>
</dbReference>